<feature type="chain" id="PRO_0000106275" description="Calcineurin-binding protein cabin-1">
    <location>
        <begin position="1"/>
        <end position="2220"/>
    </location>
</feature>
<feature type="repeat" description="TPR 1">
    <location>
        <begin position="36"/>
        <end position="69"/>
    </location>
</feature>
<feature type="repeat" description="TPR 2">
    <location>
        <begin position="90"/>
        <end position="123"/>
    </location>
</feature>
<feature type="repeat" description="TPR 3">
    <location>
        <begin position="125"/>
        <end position="157"/>
    </location>
</feature>
<feature type="repeat" description="TPR 4">
    <location>
        <begin position="615"/>
        <end position="648"/>
    </location>
</feature>
<feature type="repeat" description="TPR 5">
    <location>
        <begin position="1055"/>
        <end position="1088"/>
    </location>
</feature>
<feature type="repeat" description="TPR 6">
    <location>
        <begin position="1106"/>
        <end position="1139"/>
    </location>
</feature>
<feature type="region of interest" description="Disordered" evidence="2">
    <location>
        <begin position="361"/>
        <end position="400"/>
    </location>
</feature>
<feature type="region of interest" description="Disordered" evidence="2">
    <location>
        <begin position="1299"/>
        <end position="1476"/>
    </location>
</feature>
<feature type="region of interest" description="Disordered" evidence="2">
    <location>
        <begin position="1668"/>
        <end position="1845"/>
    </location>
</feature>
<feature type="region of interest" description="Disordered" evidence="2">
    <location>
        <begin position="1916"/>
        <end position="2165"/>
    </location>
</feature>
<feature type="region of interest" description="Required for interaction with calcineurin" evidence="1">
    <location>
        <begin position="2116"/>
        <end position="2153"/>
    </location>
</feature>
<feature type="region of interest" description="Disordered" evidence="2">
    <location>
        <begin position="2197"/>
        <end position="2220"/>
    </location>
</feature>
<feature type="compositionally biased region" description="Basic and acidic residues" evidence="2">
    <location>
        <begin position="382"/>
        <end position="391"/>
    </location>
</feature>
<feature type="compositionally biased region" description="Basic and acidic residues" evidence="2">
    <location>
        <begin position="1301"/>
        <end position="1324"/>
    </location>
</feature>
<feature type="compositionally biased region" description="Low complexity" evidence="2">
    <location>
        <begin position="1327"/>
        <end position="1349"/>
    </location>
</feature>
<feature type="compositionally biased region" description="Polar residues" evidence="2">
    <location>
        <begin position="1377"/>
        <end position="1397"/>
    </location>
</feature>
<feature type="compositionally biased region" description="Basic and acidic residues" evidence="2">
    <location>
        <begin position="1402"/>
        <end position="1412"/>
    </location>
</feature>
<feature type="compositionally biased region" description="Gly residues" evidence="2">
    <location>
        <begin position="1715"/>
        <end position="1725"/>
    </location>
</feature>
<feature type="compositionally biased region" description="Basic and acidic residues" evidence="2">
    <location>
        <begin position="1744"/>
        <end position="1753"/>
    </location>
</feature>
<feature type="compositionally biased region" description="Basic and acidic residues" evidence="2">
    <location>
        <begin position="1784"/>
        <end position="1794"/>
    </location>
</feature>
<feature type="compositionally biased region" description="Pro residues" evidence="2">
    <location>
        <begin position="1812"/>
        <end position="1823"/>
    </location>
</feature>
<feature type="compositionally biased region" description="Polar residues" evidence="2">
    <location>
        <begin position="1918"/>
        <end position="1927"/>
    </location>
</feature>
<feature type="compositionally biased region" description="Polar residues" evidence="2">
    <location>
        <begin position="1975"/>
        <end position="1989"/>
    </location>
</feature>
<feature type="compositionally biased region" description="Basic and acidic residues" evidence="2">
    <location>
        <begin position="2070"/>
        <end position="2081"/>
    </location>
</feature>
<feature type="compositionally biased region" description="Low complexity" evidence="2">
    <location>
        <begin position="2091"/>
        <end position="2112"/>
    </location>
</feature>
<feature type="compositionally biased region" description="Acidic residues" evidence="2">
    <location>
        <begin position="2207"/>
        <end position="2220"/>
    </location>
</feature>
<feature type="modified residue" description="Phosphoserine" evidence="12">
    <location>
        <position position="10"/>
    </location>
</feature>
<feature type="modified residue" description="Phosphoserine" evidence="12">
    <location>
        <position position="11"/>
    </location>
</feature>
<feature type="modified residue" description="Phosphothreonine" evidence="12">
    <location>
        <position position="12"/>
    </location>
</feature>
<feature type="modified residue" description="Phosphoserine" evidence="12">
    <location>
        <position position="20"/>
    </location>
</feature>
<feature type="modified residue" description="Phosphoserine" evidence="11 12">
    <location>
        <position position="66"/>
    </location>
</feature>
<feature type="modified residue" description="Phosphoserine" evidence="12">
    <location>
        <position position="433"/>
    </location>
</feature>
<feature type="modified residue" description="Phosphoserine" evidence="12">
    <location>
        <position position="450"/>
    </location>
</feature>
<feature type="modified residue" description="Phosphoserine" evidence="12">
    <location>
        <position position="673"/>
    </location>
</feature>
<feature type="modified residue" description="Phosphoserine" evidence="11 12">
    <location>
        <position position="1439"/>
    </location>
</feature>
<feature type="modified residue" description="Phosphothreonine" evidence="12">
    <location>
        <position position="1924"/>
    </location>
</feature>
<feature type="modified residue" description="Phosphoserine" evidence="12">
    <location>
        <position position="2094"/>
    </location>
</feature>
<feature type="modified residue" description="Phosphothreonine" evidence="10">
    <location>
        <position position="2151"/>
    </location>
</feature>
<feature type="modified residue" description="Phosphothreonine" evidence="10">
    <location>
        <position position="2154"/>
    </location>
</feature>
<feature type="splice variant" id="VSP_054161" description="In isoform 2." evidence="8">
    <location>
        <begin position="220"/>
        <end position="269"/>
    </location>
</feature>
<feature type="splice variant" id="VSP_054162" description="In isoform 2." evidence="8">
    <location>
        <begin position="1344"/>
        <end position="1372"/>
    </location>
</feature>
<feature type="sequence variant" id="VAR_052607" description="In dbSNP:rs5760185.">
    <original>A</original>
    <variation>T</variation>
    <location>
        <position position="56"/>
    </location>
</feature>
<feature type="sequence variant" id="VAR_052608" description="In dbSNP:rs17004823.">
    <original>D</original>
    <variation>N</variation>
    <location>
        <position position="225"/>
    </location>
</feature>
<feature type="sequence variant" id="VAR_052609" description="In dbSNP:rs9624393.">
    <original>S</original>
    <variation>R</variation>
    <location>
        <position position="517"/>
    </location>
</feature>
<feature type="sequence variant" id="VAR_052610" description="In dbSNP:rs9624395.">
    <original>R</original>
    <variation>S</variation>
    <location>
        <position position="660"/>
    </location>
</feature>
<feature type="sequence variant" id="VAR_052611" description="In dbSNP:rs17854874." evidence="5">
    <original>R</original>
    <variation>Q</variation>
    <location>
        <position position="853"/>
    </location>
</feature>
<feature type="sequence variant" id="VAR_052612" description="In dbSNP:rs12166151.">
    <original>Q</original>
    <variation>E</variation>
    <location>
        <position position="921"/>
    </location>
</feature>
<feature type="mutagenesis site" description="Abrogates binding to MEF2B." evidence="3">
    <original>L</original>
    <variation>A</variation>
    <variation>K</variation>
    <variation>W</variation>
    <location>
        <position position="2172"/>
    </location>
</feature>
<feature type="helix" evidence="13">
    <location>
        <begin position="2166"/>
        <end position="2177"/>
    </location>
</feature>
<proteinExistence type="evidence at protein level"/>
<gene>
    <name type="primary">CABIN1</name>
    <name type="synonym">KIAA0330</name>
</gene>
<dbReference type="EMBL" id="AF072441">
    <property type="protein sequence ID" value="AAD40846.1"/>
    <property type="molecule type" value="mRNA"/>
</dbReference>
<dbReference type="EMBL" id="AP000351">
    <property type="status" value="NOT_ANNOTATED_CDS"/>
    <property type="molecule type" value="Genomic_DNA"/>
</dbReference>
<dbReference type="EMBL" id="AP000352">
    <property type="status" value="NOT_ANNOTATED_CDS"/>
    <property type="molecule type" value="Genomic_DNA"/>
</dbReference>
<dbReference type="EMBL" id="AP000353">
    <property type="status" value="NOT_ANNOTATED_CDS"/>
    <property type="molecule type" value="Genomic_DNA"/>
</dbReference>
<dbReference type="EMBL" id="CH471095">
    <property type="protein sequence ID" value="EAW59639.1"/>
    <property type="molecule type" value="Genomic_DNA"/>
</dbReference>
<dbReference type="EMBL" id="BC054497">
    <property type="protein sequence ID" value="AAH54497.1"/>
    <property type="molecule type" value="mRNA"/>
</dbReference>
<dbReference type="EMBL" id="Z92546">
    <property type="protein sequence ID" value="CAB62954.1"/>
    <property type="molecule type" value="Genomic_DNA"/>
</dbReference>
<dbReference type="EMBL" id="AB002328">
    <property type="protein sequence ID" value="BAA20788.2"/>
    <property type="status" value="ALT_INIT"/>
    <property type="molecule type" value="mRNA"/>
</dbReference>
<dbReference type="CCDS" id="CCDS13823.1">
    <molecule id="Q9Y6J0-1"/>
</dbReference>
<dbReference type="RefSeq" id="NP_001186210.1">
    <molecule id="Q9Y6J0-1"/>
    <property type="nucleotide sequence ID" value="NM_001199281.1"/>
</dbReference>
<dbReference type="RefSeq" id="NP_001188358.1">
    <property type="nucleotide sequence ID" value="NM_001201429.1"/>
</dbReference>
<dbReference type="RefSeq" id="NP_036427.1">
    <molecule id="Q9Y6J0-1"/>
    <property type="nucleotide sequence ID" value="NM_012295.4"/>
</dbReference>
<dbReference type="RefSeq" id="XP_016884172.1">
    <molecule id="Q9Y6J0-2"/>
    <property type="nucleotide sequence ID" value="XM_017028683.3"/>
</dbReference>
<dbReference type="RefSeq" id="XP_047297175.1">
    <molecule id="Q9Y6J0-1"/>
    <property type="nucleotide sequence ID" value="XM_047441219.1"/>
</dbReference>
<dbReference type="RefSeq" id="XP_054181297.1">
    <molecule id="Q9Y6J0-1"/>
    <property type="nucleotide sequence ID" value="XM_054325322.1"/>
</dbReference>
<dbReference type="RefSeq" id="XP_054181329.1">
    <molecule id="Q9Y6J0-2"/>
    <property type="nucleotide sequence ID" value="XM_054325354.1"/>
</dbReference>
<dbReference type="PDB" id="1N6J">
    <property type="method" value="X-ray"/>
    <property type="resolution" value="2.20 A"/>
    <property type="chains" value="G=2156-2190"/>
</dbReference>
<dbReference type="PDBsum" id="1N6J"/>
<dbReference type="SMR" id="Q9Y6J0"/>
<dbReference type="BioGRID" id="117070">
    <property type="interactions" value="76"/>
</dbReference>
<dbReference type="CORUM" id="Q9Y6J0"/>
<dbReference type="FunCoup" id="Q9Y6J0">
    <property type="interactions" value="3089"/>
</dbReference>
<dbReference type="IntAct" id="Q9Y6J0">
    <property type="interactions" value="58"/>
</dbReference>
<dbReference type="MINT" id="Q9Y6J0"/>
<dbReference type="STRING" id="9606.ENSP00000381364"/>
<dbReference type="GlyGen" id="Q9Y6J0">
    <property type="glycosylation" value="3 sites, 1 O-linked glycan (1 site)"/>
</dbReference>
<dbReference type="iPTMnet" id="Q9Y6J0"/>
<dbReference type="MetOSite" id="Q9Y6J0"/>
<dbReference type="PhosphoSitePlus" id="Q9Y6J0"/>
<dbReference type="SwissPalm" id="Q9Y6J0"/>
<dbReference type="BioMuta" id="CABIN1"/>
<dbReference type="DMDM" id="6685261"/>
<dbReference type="jPOST" id="Q9Y6J0"/>
<dbReference type="MassIVE" id="Q9Y6J0"/>
<dbReference type="PaxDb" id="9606-ENSP00000381364"/>
<dbReference type="PeptideAtlas" id="Q9Y6J0"/>
<dbReference type="ProteomicsDB" id="33920"/>
<dbReference type="ProteomicsDB" id="86699">
    <molecule id="Q9Y6J0-1"/>
</dbReference>
<dbReference type="Pumba" id="Q9Y6J0"/>
<dbReference type="Antibodypedia" id="23901">
    <property type="antibodies" value="97 antibodies from 21 providers"/>
</dbReference>
<dbReference type="DNASU" id="23523"/>
<dbReference type="Ensembl" id="ENST00000263119.10">
    <molecule id="Q9Y6J0-1"/>
    <property type="protein sequence ID" value="ENSP00000263119.5"/>
    <property type="gene ID" value="ENSG00000099991.18"/>
</dbReference>
<dbReference type="Ensembl" id="ENST00000398319.6">
    <molecule id="Q9Y6J0-1"/>
    <property type="protein sequence ID" value="ENSP00000381364.2"/>
    <property type="gene ID" value="ENSG00000099991.18"/>
</dbReference>
<dbReference type="Ensembl" id="ENST00000405822.6">
    <molecule id="Q9Y6J0-2"/>
    <property type="protein sequence ID" value="ENSP00000384694.2"/>
    <property type="gene ID" value="ENSG00000099991.18"/>
</dbReference>
<dbReference type="GeneID" id="23523"/>
<dbReference type="KEGG" id="hsa:23523"/>
<dbReference type="MANE-Select" id="ENST00000263119.10">
    <property type="protein sequence ID" value="ENSP00000263119.5"/>
    <property type="RefSeq nucleotide sequence ID" value="NM_012295.4"/>
    <property type="RefSeq protein sequence ID" value="NP_036427.1"/>
</dbReference>
<dbReference type="UCSC" id="uc002zzi.1">
    <molecule id="Q9Y6J0-1"/>
    <property type="organism name" value="human"/>
</dbReference>
<dbReference type="AGR" id="HGNC:24187"/>
<dbReference type="CTD" id="23523"/>
<dbReference type="DisGeNET" id="23523"/>
<dbReference type="GeneCards" id="CABIN1"/>
<dbReference type="HGNC" id="HGNC:24187">
    <property type="gene designation" value="CABIN1"/>
</dbReference>
<dbReference type="HPA" id="ENSG00000099991">
    <property type="expression patterns" value="Low tissue specificity"/>
</dbReference>
<dbReference type="MalaCards" id="CABIN1"/>
<dbReference type="MIM" id="604251">
    <property type="type" value="gene"/>
</dbReference>
<dbReference type="neXtProt" id="NX_Q9Y6J0"/>
<dbReference type="OpenTargets" id="ENSG00000099991"/>
<dbReference type="PharmGKB" id="PA164717549"/>
<dbReference type="VEuPathDB" id="HostDB:ENSG00000099991"/>
<dbReference type="eggNOG" id="ENOG502QPUI">
    <property type="taxonomic scope" value="Eukaryota"/>
</dbReference>
<dbReference type="GeneTree" id="ENSGT00390000008529"/>
<dbReference type="InParanoid" id="Q9Y6J0"/>
<dbReference type="OrthoDB" id="77564at2759"/>
<dbReference type="PAN-GO" id="Q9Y6J0">
    <property type="GO annotations" value="3 GO annotations based on evolutionary models"/>
</dbReference>
<dbReference type="PhylomeDB" id="Q9Y6J0"/>
<dbReference type="TreeFam" id="TF323227"/>
<dbReference type="PathwayCommons" id="Q9Y6J0"/>
<dbReference type="Reactome" id="R-HSA-2559584">
    <property type="pathway name" value="Formation of Senescence-Associated Heterochromatin Foci (SAHF)"/>
</dbReference>
<dbReference type="SignaLink" id="Q9Y6J0"/>
<dbReference type="SIGNOR" id="Q9Y6J0"/>
<dbReference type="BioGRID-ORCS" id="23523">
    <property type="hits" value="128 hits in 1192 CRISPR screens"/>
</dbReference>
<dbReference type="ChiTaRS" id="CABIN1">
    <property type="organism name" value="human"/>
</dbReference>
<dbReference type="EvolutionaryTrace" id="Q9Y6J0"/>
<dbReference type="GeneWiki" id="CABIN1"/>
<dbReference type="GenomeRNAi" id="23523"/>
<dbReference type="Pharos" id="Q9Y6J0">
    <property type="development level" value="Tbio"/>
</dbReference>
<dbReference type="PRO" id="PR:Q9Y6J0"/>
<dbReference type="Proteomes" id="UP000005640">
    <property type="component" value="Chromosome 22"/>
</dbReference>
<dbReference type="RNAct" id="Q9Y6J0">
    <property type="molecule type" value="protein"/>
</dbReference>
<dbReference type="Bgee" id="ENSG00000099991">
    <property type="expression patterns" value="Expressed in right hemisphere of cerebellum and 205 other cell types or tissues"/>
</dbReference>
<dbReference type="ExpressionAtlas" id="Q9Y6J0">
    <property type="expression patterns" value="baseline and differential"/>
</dbReference>
<dbReference type="GO" id="GO:0016235">
    <property type="term" value="C:aggresome"/>
    <property type="evidence" value="ECO:0000314"/>
    <property type="project" value="HPA"/>
</dbReference>
<dbReference type="GO" id="GO:0005829">
    <property type="term" value="C:cytosol"/>
    <property type="evidence" value="ECO:0000314"/>
    <property type="project" value="HPA"/>
</dbReference>
<dbReference type="GO" id="GO:0005654">
    <property type="term" value="C:nucleoplasm"/>
    <property type="evidence" value="ECO:0000314"/>
    <property type="project" value="HPA"/>
</dbReference>
<dbReference type="GO" id="GO:0005634">
    <property type="term" value="C:nucleus"/>
    <property type="evidence" value="ECO:0000318"/>
    <property type="project" value="GO_Central"/>
</dbReference>
<dbReference type="GO" id="GO:0004864">
    <property type="term" value="F:protein phosphatase inhibitor activity"/>
    <property type="evidence" value="ECO:0000303"/>
    <property type="project" value="UniProtKB"/>
</dbReference>
<dbReference type="GO" id="GO:0007166">
    <property type="term" value="P:cell surface receptor signaling pathway"/>
    <property type="evidence" value="ECO:0000303"/>
    <property type="project" value="UniProtKB"/>
</dbReference>
<dbReference type="GO" id="GO:0006334">
    <property type="term" value="P:nucleosome assembly"/>
    <property type="evidence" value="ECO:0000314"/>
    <property type="project" value="GO_Central"/>
</dbReference>
<dbReference type="CDD" id="cd13839">
    <property type="entry name" value="MEF2_binding"/>
    <property type="match status" value="1"/>
</dbReference>
<dbReference type="FunFam" id="1.25.40.10:FF:000654">
    <property type="entry name" value="Calcineurin-binding protein 1"/>
    <property type="match status" value="1"/>
</dbReference>
<dbReference type="FunFam" id="1.25.40.10:FF:000076">
    <property type="entry name" value="calcineurin-binding protein cabin-1 isoform X1"/>
    <property type="match status" value="1"/>
</dbReference>
<dbReference type="Gene3D" id="1.25.40.10">
    <property type="entry name" value="Tetratricopeptide repeat domain"/>
    <property type="match status" value="2"/>
</dbReference>
<dbReference type="IDEAL" id="IID00183"/>
<dbReference type="InterPro" id="IPR033053">
    <property type="entry name" value="Hir3/CABIN1"/>
</dbReference>
<dbReference type="InterPro" id="IPR015134">
    <property type="entry name" value="MEF2-bd"/>
</dbReference>
<dbReference type="InterPro" id="IPR011990">
    <property type="entry name" value="TPR-like_helical_dom_sf"/>
</dbReference>
<dbReference type="InterPro" id="IPR019734">
    <property type="entry name" value="TPR_rpt"/>
</dbReference>
<dbReference type="PANTHER" id="PTHR15502">
    <property type="entry name" value="CALCINEURIN-BINDING PROTEIN CABIN 1-RELATED"/>
    <property type="match status" value="1"/>
</dbReference>
<dbReference type="PANTHER" id="PTHR15502:SF7">
    <property type="entry name" value="CALCINEURIN-BINDING PROTEIN CABIN-1"/>
    <property type="match status" value="1"/>
</dbReference>
<dbReference type="Pfam" id="PF09047">
    <property type="entry name" value="MEF2_binding"/>
    <property type="match status" value="1"/>
</dbReference>
<dbReference type="SMART" id="SM00028">
    <property type="entry name" value="TPR"/>
    <property type="match status" value="5"/>
</dbReference>
<dbReference type="SUPFAM" id="SSF48452">
    <property type="entry name" value="TPR-like"/>
    <property type="match status" value="2"/>
</dbReference>
<dbReference type="PROSITE" id="PS50005">
    <property type="entry name" value="TPR"/>
    <property type="match status" value="4"/>
</dbReference>
<dbReference type="PROSITE" id="PS50293">
    <property type="entry name" value="TPR_REGION"/>
    <property type="match status" value="2"/>
</dbReference>
<name>CABIN_HUMAN</name>
<reference key="1">
    <citation type="journal article" date="1998" name="Immunity">
        <title>Cabin 1, a negative regulator for calcineurin signaling in T lymphocytes.</title>
        <authorList>
            <person name="Sun L."/>
            <person name="Youn H.-D."/>
            <person name="Loh C."/>
            <person name="Stolow M."/>
            <person name="He W."/>
            <person name="Liu J.O."/>
        </authorList>
    </citation>
    <scope>NUCLEOTIDE SEQUENCE [MRNA] (ISOFORM 1)</scope>
    <scope>FUNCTION</scope>
    <scope>INTERACTION WITH CALCINEURIN</scope>
    <scope>SUBCELLULAR LOCATION</scope>
    <scope>TISSUE SPECIFICITY</scope>
    <scope>PHOSPHORYLATION</scope>
    <source>
        <tissue>Kidney</tissue>
    </source>
</reference>
<reference key="2">
    <citation type="journal article" date="1999" name="Nature">
        <title>The DNA sequence of human chromosome 22.</title>
        <authorList>
            <person name="Dunham I."/>
            <person name="Hunt A.R."/>
            <person name="Collins J.E."/>
            <person name="Bruskiewich R."/>
            <person name="Beare D.M."/>
            <person name="Clamp M."/>
            <person name="Smink L.J."/>
            <person name="Ainscough R."/>
            <person name="Almeida J.P."/>
            <person name="Babbage A.K."/>
            <person name="Bagguley C."/>
            <person name="Bailey J."/>
            <person name="Barlow K.F."/>
            <person name="Bates K.N."/>
            <person name="Beasley O.P."/>
            <person name="Bird C.P."/>
            <person name="Blakey S.E."/>
            <person name="Bridgeman A.M."/>
            <person name="Buck D."/>
            <person name="Burgess J."/>
            <person name="Burrill W.D."/>
            <person name="Burton J."/>
            <person name="Carder C."/>
            <person name="Carter N.P."/>
            <person name="Chen Y."/>
            <person name="Clark G."/>
            <person name="Clegg S.M."/>
            <person name="Cobley V.E."/>
            <person name="Cole C.G."/>
            <person name="Collier R.E."/>
            <person name="Connor R."/>
            <person name="Conroy D."/>
            <person name="Corby N.R."/>
            <person name="Coville G.J."/>
            <person name="Cox A.V."/>
            <person name="Davis J."/>
            <person name="Dawson E."/>
            <person name="Dhami P.D."/>
            <person name="Dockree C."/>
            <person name="Dodsworth S.J."/>
            <person name="Durbin R.M."/>
            <person name="Ellington A.G."/>
            <person name="Evans K.L."/>
            <person name="Fey J.M."/>
            <person name="Fleming K."/>
            <person name="French L."/>
            <person name="Garner A.A."/>
            <person name="Gilbert J.G.R."/>
            <person name="Goward M.E."/>
            <person name="Grafham D.V."/>
            <person name="Griffiths M.N.D."/>
            <person name="Hall C."/>
            <person name="Hall R.E."/>
            <person name="Hall-Tamlyn G."/>
            <person name="Heathcott R.W."/>
            <person name="Ho S."/>
            <person name="Holmes S."/>
            <person name="Hunt S.E."/>
            <person name="Jones M.C."/>
            <person name="Kershaw J."/>
            <person name="Kimberley A.M."/>
            <person name="King A."/>
            <person name="Laird G.K."/>
            <person name="Langford C.F."/>
            <person name="Leversha M.A."/>
            <person name="Lloyd C."/>
            <person name="Lloyd D.M."/>
            <person name="Martyn I.D."/>
            <person name="Mashreghi-Mohammadi M."/>
            <person name="Matthews L.H."/>
            <person name="Mccann O.T."/>
            <person name="Mcclay J."/>
            <person name="Mclaren S."/>
            <person name="McMurray A.A."/>
            <person name="Milne S.A."/>
            <person name="Mortimore B.J."/>
            <person name="Odell C.N."/>
            <person name="Pavitt R."/>
            <person name="Pearce A.V."/>
            <person name="Pearson D."/>
            <person name="Phillimore B.J.C.T."/>
            <person name="Phillips S.H."/>
            <person name="Plumb R.W."/>
            <person name="Ramsay H."/>
            <person name="Ramsey Y."/>
            <person name="Rogers L."/>
            <person name="Ross M.T."/>
            <person name="Scott C.E."/>
            <person name="Sehra H.K."/>
            <person name="Skuce C.D."/>
            <person name="Smalley S."/>
            <person name="Smith M.L."/>
            <person name="Soderlund C."/>
            <person name="Spragon L."/>
            <person name="Steward C.A."/>
            <person name="Sulston J.E."/>
            <person name="Swann R.M."/>
            <person name="Vaudin M."/>
            <person name="Wall M."/>
            <person name="Wallis J.M."/>
            <person name="Whiteley M.N."/>
            <person name="Willey D.L."/>
            <person name="Williams L."/>
            <person name="Williams S.A."/>
            <person name="Williamson H."/>
            <person name="Wilmer T.E."/>
            <person name="Wilming L."/>
            <person name="Wright C.L."/>
            <person name="Hubbard T."/>
            <person name="Bentley D.R."/>
            <person name="Beck S."/>
            <person name="Rogers J."/>
            <person name="Shimizu N."/>
            <person name="Minoshima S."/>
            <person name="Kawasaki K."/>
            <person name="Sasaki T."/>
            <person name="Asakawa S."/>
            <person name="Kudoh J."/>
            <person name="Shintani A."/>
            <person name="Shibuya K."/>
            <person name="Yoshizaki Y."/>
            <person name="Aoki N."/>
            <person name="Mitsuyama S."/>
            <person name="Roe B.A."/>
            <person name="Chen F."/>
            <person name="Chu L."/>
            <person name="Crabtree J."/>
            <person name="Deschamps S."/>
            <person name="Do A."/>
            <person name="Do T."/>
            <person name="Dorman A."/>
            <person name="Fang F."/>
            <person name="Fu Y."/>
            <person name="Hu P."/>
            <person name="Hua A."/>
            <person name="Kenton S."/>
            <person name="Lai H."/>
            <person name="Lao H.I."/>
            <person name="Lewis J."/>
            <person name="Lewis S."/>
            <person name="Lin S.-P."/>
            <person name="Loh P."/>
            <person name="Malaj E."/>
            <person name="Nguyen T."/>
            <person name="Pan H."/>
            <person name="Phan S."/>
            <person name="Qi S."/>
            <person name="Qian Y."/>
            <person name="Ray L."/>
            <person name="Ren Q."/>
            <person name="Shaull S."/>
            <person name="Sloan D."/>
            <person name="Song L."/>
            <person name="Wang Q."/>
            <person name="Wang Y."/>
            <person name="Wang Z."/>
            <person name="White J."/>
            <person name="Willingham D."/>
            <person name="Wu H."/>
            <person name="Yao Z."/>
            <person name="Zhan M."/>
            <person name="Zhang G."/>
            <person name="Chissoe S."/>
            <person name="Murray J."/>
            <person name="Miller N."/>
            <person name="Minx P."/>
            <person name="Fulton R."/>
            <person name="Johnson D."/>
            <person name="Bemis G."/>
            <person name="Bentley D."/>
            <person name="Bradshaw H."/>
            <person name="Bourne S."/>
            <person name="Cordes M."/>
            <person name="Du Z."/>
            <person name="Fulton L."/>
            <person name="Goela D."/>
            <person name="Graves T."/>
            <person name="Hawkins J."/>
            <person name="Hinds K."/>
            <person name="Kemp K."/>
            <person name="Latreille P."/>
            <person name="Layman D."/>
            <person name="Ozersky P."/>
            <person name="Rohlfing T."/>
            <person name="Scheet P."/>
            <person name="Walker C."/>
            <person name="Wamsley A."/>
            <person name="Wohldmann P."/>
            <person name="Pepin K."/>
            <person name="Nelson J."/>
            <person name="Korf I."/>
            <person name="Bedell J.A."/>
            <person name="Hillier L.W."/>
            <person name="Mardis E."/>
            <person name="Waterston R."/>
            <person name="Wilson R."/>
            <person name="Emanuel B.S."/>
            <person name="Shaikh T."/>
            <person name="Kurahashi H."/>
            <person name="Saitta S."/>
            <person name="Budarf M.L."/>
            <person name="McDermid H.E."/>
            <person name="Johnson A."/>
            <person name="Wong A.C.C."/>
            <person name="Morrow B.E."/>
            <person name="Edelmann L."/>
            <person name="Kim U.J."/>
            <person name="Shizuya H."/>
            <person name="Simon M.I."/>
            <person name="Dumanski J.P."/>
            <person name="Peyrard M."/>
            <person name="Kedra D."/>
            <person name="Seroussi E."/>
            <person name="Fransson I."/>
            <person name="Tapia I."/>
            <person name="Bruder C.E."/>
            <person name="O'Brien K.P."/>
            <person name="Wilkinson P."/>
            <person name="Bodenteich A."/>
            <person name="Hartman K."/>
            <person name="Hu X."/>
            <person name="Khan A.S."/>
            <person name="Lane L."/>
            <person name="Tilahun Y."/>
            <person name="Wright H."/>
        </authorList>
    </citation>
    <scope>NUCLEOTIDE SEQUENCE [LARGE SCALE GENOMIC DNA]</scope>
</reference>
<reference key="3">
    <citation type="submission" date="2005-07" db="EMBL/GenBank/DDBJ databases">
        <authorList>
            <person name="Mural R.J."/>
            <person name="Istrail S."/>
            <person name="Sutton G."/>
            <person name="Florea L."/>
            <person name="Halpern A.L."/>
            <person name="Mobarry C.M."/>
            <person name="Lippert R."/>
            <person name="Walenz B."/>
            <person name="Shatkay H."/>
            <person name="Dew I."/>
            <person name="Miller J.R."/>
            <person name="Flanigan M.J."/>
            <person name="Edwards N.J."/>
            <person name="Bolanos R."/>
            <person name="Fasulo D."/>
            <person name="Halldorsson B.V."/>
            <person name="Hannenhalli S."/>
            <person name="Turner R."/>
            <person name="Yooseph S."/>
            <person name="Lu F."/>
            <person name="Nusskern D.R."/>
            <person name="Shue B.C."/>
            <person name="Zheng X.H."/>
            <person name="Zhong F."/>
            <person name="Delcher A.L."/>
            <person name="Huson D.H."/>
            <person name="Kravitz S.A."/>
            <person name="Mouchard L."/>
            <person name="Reinert K."/>
            <person name="Remington K.A."/>
            <person name="Clark A.G."/>
            <person name="Waterman M.S."/>
            <person name="Eichler E.E."/>
            <person name="Adams M.D."/>
            <person name="Hunkapiller M.W."/>
            <person name="Myers E.W."/>
            <person name="Venter J.C."/>
        </authorList>
    </citation>
    <scope>NUCLEOTIDE SEQUENCE [LARGE SCALE GENOMIC DNA]</scope>
</reference>
<reference key="4">
    <citation type="journal article" date="2004" name="Genome Res.">
        <title>The status, quality, and expansion of the NIH full-length cDNA project: the Mammalian Gene Collection (MGC).</title>
        <authorList>
            <consortium name="The MGC Project Team"/>
        </authorList>
    </citation>
    <scope>NUCLEOTIDE SEQUENCE [LARGE SCALE MRNA] (ISOFORM 2)</scope>
    <scope>VARIANT GLN-853</scope>
    <source>
        <tissue>Testis</tissue>
    </source>
</reference>
<reference key="5">
    <citation type="journal article" date="1997" name="DNA Res.">
        <title>Prediction of the coding sequences of unidentified human genes. VII. The complete sequences of 100 new cDNA clones from brain which can code for large proteins in vitro.</title>
        <authorList>
            <person name="Nagase T."/>
            <person name="Ishikawa K."/>
            <person name="Nakajima D."/>
            <person name="Ohira M."/>
            <person name="Seki N."/>
            <person name="Miyajima N."/>
            <person name="Tanaka A."/>
            <person name="Kotani H."/>
            <person name="Nomura N."/>
            <person name="Ohara O."/>
        </authorList>
    </citation>
    <scope>NUCLEOTIDE SEQUENCE [LARGE SCALE MRNA] OF 319-2220 (ISOFORM 1)</scope>
    <source>
        <tissue>Brain</tissue>
    </source>
</reference>
<reference key="6">
    <citation type="journal article" date="2004" name="Cell">
        <title>Histone H3.1 and H3.3 complexes mediate nucleosome assembly pathways dependent or independent of DNA synthesis.</title>
        <authorList>
            <person name="Tagami H."/>
            <person name="Ray-Gallet D."/>
            <person name="Almouzni G."/>
            <person name="Nakatani Y."/>
        </authorList>
    </citation>
    <scope>FUNCTION</scope>
    <scope>IDENTIFICATION BY MASS SPECTROMETRY</scope>
    <scope>IDENTIFICATION IN A COMPLEX WITH ASF1A; HIRA; HISTONE H3.3 AND UBN1</scope>
</reference>
<reference key="7">
    <citation type="journal article" date="2007" name="Science">
        <title>ATM and ATR substrate analysis reveals extensive protein networks responsive to DNA damage.</title>
        <authorList>
            <person name="Matsuoka S."/>
            <person name="Ballif B.A."/>
            <person name="Smogorzewska A."/>
            <person name="McDonald E.R. III"/>
            <person name="Hurov K.E."/>
            <person name="Luo J."/>
            <person name="Bakalarski C.E."/>
            <person name="Zhao Z."/>
            <person name="Solimini N."/>
            <person name="Lerenthal Y."/>
            <person name="Shiloh Y."/>
            <person name="Gygi S.P."/>
            <person name="Elledge S.J."/>
        </authorList>
    </citation>
    <scope>IDENTIFICATION BY MASS SPECTROMETRY [LARGE SCALE ANALYSIS]</scope>
    <source>
        <tissue>Embryonic kidney</tissue>
    </source>
</reference>
<reference key="8">
    <citation type="journal article" date="2010" name="Sci. Signal.">
        <title>Quantitative phosphoproteomics reveals widespread full phosphorylation site occupancy during mitosis.</title>
        <authorList>
            <person name="Olsen J.V."/>
            <person name="Vermeulen M."/>
            <person name="Santamaria A."/>
            <person name="Kumar C."/>
            <person name="Miller M.L."/>
            <person name="Jensen L.J."/>
            <person name="Gnad F."/>
            <person name="Cox J."/>
            <person name="Jensen T.S."/>
            <person name="Nigg E.A."/>
            <person name="Brunak S."/>
            <person name="Mann M."/>
        </authorList>
    </citation>
    <scope>PHOSPHORYLATION [LARGE SCALE ANALYSIS] AT THR-2151 AND THR-2154</scope>
    <scope>IDENTIFICATION BY MASS SPECTROMETRY [LARGE SCALE ANALYSIS]</scope>
    <source>
        <tissue>Cervix carcinoma</tissue>
    </source>
</reference>
<reference key="9">
    <citation type="journal article" date="2011" name="Sci. Signal.">
        <title>System-wide temporal characterization of the proteome and phosphoproteome of human embryonic stem cell differentiation.</title>
        <authorList>
            <person name="Rigbolt K.T."/>
            <person name="Prokhorova T.A."/>
            <person name="Akimov V."/>
            <person name="Henningsen J."/>
            <person name="Johansen P.T."/>
            <person name="Kratchmarova I."/>
            <person name="Kassem M."/>
            <person name="Mann M."/>
            <person name="Olsen J.V."/>
            <person name="Blagoev B."/>
        </authorList>
    </citation>
    <scope>PHOSPHORYLATION [LARGE SCALE ANALYSIS] AT SER-66 AND SER-1439</scope>
    <scope>IDENTIFICATION BY MASS SPECTROMETRY [LARGE SCALE ANALYSIS]</scope>
</reference>
<reference key="10">
    <citation type="journal article" date="2013" name="J. Proteome Res.">
        <title>Toward a comprehensive characterization of a human cancer cell phosphoproteome.</title>
        <authorList>
            <person name="Zhou H."/>
            <person name="Di Palma S."/>
            <person name="Preisinger C."/>
            <person name="Peng M."/>
            <person name="Polat A.N."/>
            <person name="Heck A.J."/>
            <person name="Mohammed S."/>
        </authorList>
    </citation>
    <scope>PHOSPHORYLATION [LARGE SCALE ANALYSIS] AT SER-10; SER-11; THR-12; SER-20; SER-66; SER-433; SER-450; SER-673; SER-1439; THR-1924 AND SER-2094</scope>
    <scope>IDENTIFICATION BY MASS SPECTROMETRY [LARGE SCALE ANALYSIS]</scope>
    <source>
        <tissue>Cervix carcinoma</tissue>
        <tissue>Erythroleukemia</tissue>
    </source>
</reference>
<reference key="11">
    <citation type="journal article" date="2013" name="Nucleic Acids Res.">
        <title>Phosphorylation and ubiquitination-dependent degradation of CABIN1 releases p53 for transactivation upon genotoxic stress.</title>
        <authorList>
            <person name="Choi S.Y."/>
            <person name="Jang H."/>
            <person name="Roe J.S."/>
            <person name="Kim S.T."/>
            <person name="Cho E.J."/>
            <person name="Youn H.D."/>
        </authorList>
    </citation>
    <scope>PHOSPHORYLATION BY ATM AND CHK2</scope>
    <scope>UBIQUITINATION</scope>
</reference>
<reference key="12">
    <citation type="journal article" date="2014" name="J. Proteomics">
        <title>An enzyme assisted RP-RPLC approach for in-depth analysis of human liver phosphoproteome.</title>
        <authorList>
            <person name="Bian Y."/>
            <person name="Song C."/>
            <person name="Cheng K."/>
            <person name="Dong M."/>
            <person name="Wang F."/>
            <person name="Huang J."/>
            <person name="Sun D."/>
            <person name="Wang L."/>
            <person name="Ye M."/>
            <person name="Zou H."/>
        </authorList>
    </citation>
    <scope>IDENTIFICATION BY MASS SPECTROMETRY [LARGE SCALE ANALYSIS]</scope>
    <source>
        <tissue>Liver</tissue>
    </source>
</reference>
<reference key="13">
    <citation type="journal article" date="2003" name="Nature">
        <title>Sequence-specific recruitment of transcriptional co-repressor Cabin1 by myocyte enhancer factor-2.</title>
        <authorList>
            <person name="Han A."/>
            <person name="Pan F."/>
            <person name="Stroud J.C."/>
            <person name="Youn H.-D."/>
            <person name="Liu J.O."/>
            <person name="Chen L."/>
        </authorList>
    </citation>
    <scope>X-RAY CRYSTALLOGRAPHY (2.2 ANGSTROMS) OF 2156-2190 IN COMPLEX WITH MEF2B AND DNA</scope>
    <scope>MUTAGENESIS OF LEU-2172</scope>
</reference>
<keyword id="KW-0002">3D-structure</keyword>
<keyword id="KW-0025">Alternative splicing</keyword>
<keyword id="KW-0156">Chromatin regulator</keyword>
<keyword id="KW-0539">Nucleus</keyword>
<keyword id="KW-0597">Phosphoprotein</keyword>
<keyword id="KW-1267">Proteomics identification</keyword>
<keyword id="KW-1185">Reference proteome</keyword>
<keyword id="KW-0677">Repeat</keyword>
<keyword id="KW-0802">TPR repeat</keyword>
<keyword id="KW-0832">Ubl conjugation</keyword>
<organism>
    <name type="scientific">Homo sapiens</name>
    <name type="common">Human</name>
    <dbReference type="NCBI Taxonomy" id="9606"/>
    <lineage>
        <taxon>Eukaryota</taxon>
        <taxon>Metazoa</taxon>
        <taxon>Chordata</taxon>
        <taxon>Craniata</taxon>
        <taxon>Vertebrata</taxon>
        <taxon>Euteleostomi</taxon>
        <taxon>Mammalia</taxon>
        <taxon>Eutheria</taxon>
        <taxon>Euarchontoglires</taxon>
        <taxon>Primates</taxon>
        <taxon>Haplorrhini</taxon>
        <taxon>Catarrhini</taxon>
        <taxon>Hominidae</taxon>
        <taxon>Homo</taxon>
    </lineage>
</organism>
<accession>Q9Y6J0</accession>
<accession>G5E9F3</accession>
<accession>Q6PHY0</accession>
<accession>Q9Y460</accession>
<comment type="function">
    <text evidence="4 7">May be required for replication-independent chromatin assembly. May serve as a negative regulator of T-cell receptor (TCR) signaling via inhibition of calcineurin. Inhibition of activated calcineurin is dependent on both PKC and calcium signals. Acts as a negative regulator of p53/TP53 by keeping p53 in an inactive state on chromatin at promoters of a subset of it's target genes.</text>
</comment>
<comment type="subunit">
    <text evidence="3 4 7">Component of a complex that includes at least ASF1A, CABIN1, HIRA, histone H3.3 and UBN1. Interacts with calcineurin. Interacts with MEF2B.</text>
</comment>
<comment type="interaction">
    <interactant intactId="EBI-2795712">
        <id>Q9Y6J0</id>
    </interactant>
    <interactant intactId="EBI-6427785">
        <id>Q02080</id>
        <label>MEF2B</label>
    </interactant>
    <organismsDiffer>false</organismsDiffer>
    <experiments>5</experiments>
</comment>
<comment type="subcellular location">
    <subcellularLocation>
        <location evidence="7">Nucleus</location>
    </subcellularLocation>
</comment>
<comment type="alternative products">
    <event type="alternative splicing"/>
    <isoform>
        <id>Q9Y6J0-1</id>
        <name>1</name>
        <sequence type="displayed"/>
    </isoform>
    <isoform>
        <id>Q9Y6J0-2</id>
        <name>2</name>
        <sequence type="described" ref="VSP_054161 VSP_054162"/>
    </isoform>
</comment>
<comment type="tissue specificity">
    <text evidence="7">Widely expressed in different tissues.</text>
</comment>
<comment type="PTM">
    <text evidence="6 7">Activated through PKC-mediated hyperphosphorylation. Phosphorylation by the DNA damage kinases ATM and CHK2 enhances ubiquitination.</text>
</comment>
<comment type="PTM">
    <text evidence="6">Upon genotoxic stress, ubiquitination by the DCX(DDB2) E3 ubiquitin-protein ligase complex targets CABIN1 for proteasomal degradation, leading to the release of p53/TP53.</text>
</comment>
<comment type="sequence caution" evidence="9">
    <conflict type="erroneous initiation">
        <sequence resource="EMBL-CDS" id="BAA20788"/>
    </conflict>
</comment>
<sequence>MIRIAALNASSTIEDDHEGSFKSHKTQTKEAQEAEAFALYHKALDLQKHDRFEESAKAYHELLEASLLREAVSSGDEKEGLKHPGLILKYSTYKNLAQLAAQREDLETAMEFYLEAVMLDSTDVNLWYKIGHVALRLIRIPLARHAFEEGLRCNPDHWPCLDNLITVLYTLSDYTTCLYFICKALEKDCRYSKGLVLKEKIFEEQPCLRKDSLRMFLKCDMSIHDVSVSAAETQAIVDEALGLRKKRQALIVREKEPDLKLVQPIPFFTWKCLGESLLAMYNHLTTCEPPRPSLGKRIDLSDYQDPSQPLESSMVVTPVNVIQPSTVSTNPAVAVAEPVVSYTSVATTSFPLHSPGLLETGAPVGDISGGDKSKKGVKRKKISEESGETAKRRSARVRNTKCKKEEKVDFQELLMKFLPSRLRKLDPEEEDDSFNNYEVQSEAKLESFPSIGPQRLSFDSATFMESEKQDVHEFLLENLTNGGILELMMRYLKAMGHKFLVRWPPGLAEVVLSVYHSWRRHSTSLPNPLLRDCSNKHIKDMMLMSLSCMELQLDQWLLTKGRSSAVSPRNCPAGMVNGRFGPDFPGTHCLGDLLQLSFASSQRDLFEDGWLEFVVRVYWLKARFLALQGDMEQALENYDICTEMLQSSTAIQVEAGAERRDIVIRLPNLHNDSVVSLEEIDKNLKSLERCQSLEEIQRLYEAGDYKAVVHLLRPTLCTSGFDRAKHLEFMTSIPERPAQLLLLQDSLLRLKDYRQCFECSDVALNEAVQQMVNSGEAAAKEEWVATVTQLLMGIEQALSADSSGSILKVSSSTTGLVRLTNNLIQVIDCSMAVQEEAKEPHVSSVLPWIILHRIIWQEEDTFHSLCHQQQLQNPAEEGMSETPMLPSSLMLLNTAHEYLGRRSWCCNSDGALLRFYVRVLQKELAASTSEDTHPYKEELETALEQCFYCLYSFPSKKSKARYLEEHSAQQVDLIWEDALFMFEYFKPKTLPEFDSYKTSTVSADLANLLKRIATIVPRTERPALSLDKVSAYIEGTSTEVPCLPEGADPSPPVVNELYYLLADYHFKNKEQSKAIKFYMHDICICPNRFDSWAGMALARASRIQDKLNSNELKSDGPIWKHATPVLNCFRRALEIDSSNLSLWIEYGTMSYALHSFASRQLKQWRGELPPELVQQMEGRRDSMLETAKHCFTSAARCEGDGDEEEWLIHYMLGKVAEKQQQPPTVYLLHYRQAGHYLHEEAARYPKKIHYHNPPELAMEALEVYFRLHASILKLLGKPDSGVGAEVLVNFMKEAAEGPFARGEEKNTPKASEKEKACLVDEDSHSSAGTLPGPGASLPSSSGPGLTSPPYTATPIDHDYVKCKKPHQQATPDDRSQDSTAVALSDSSSTQDFFNEPTSLLEGSRKSYTEKRLPILSSQAGATGKDLQGATEERGKNEESLESTEGFRAAEQGVQKPAAETPASACIPGKPSASTPTLWDGKKRGDLPGEPVAFPQGLPAGAEEQRQFLTEQCIASFRLCLSRFPQHYKSLYRLAFLYTYSKTHRNLQWARDVLLGSSIPWQQLQHMPAQGLFCERNKTNFFNGIWRIPVDEIDRPGSFAWHMNRSIVLLLKVLAQLRDHSTLLKVSSMLQRTPDQGKKYLRDADRQVLAQRAFILTVKVLEDTLSELAEGSERPGPKVCGLPGARMTTDVSHKASPEDGQEGLPQPKKPPLADGSGPGPEPGGKVGLLNHRPVAMDAGDSADQSGERKDKESPRAGPTEPMDTSEATVCHSDLERTPPLLPGRPARDRGPESRPTELSLEELSISARQQPTPLTPAQPAPAPAPATTTGTRAGGHPEEPLSRLSRKRKLLEDTESGKTLLLDAYRVWQQGQKGVAYDLGRVERIMSETYMLIKQVDEEAALEQAVKFCQVHLGAAAQRQASGDTPTTPKHPKDSRENFFPVTVVPTAPDPVPADSVQRPSDAHTKPRPALAAATTIITCPPSASASTLDQSKDPGPPRPHRPEATPSMASLGPEGEELARVAEGTSFPPQEPRHSPQVKMAPTSSPAEPHCWPAEAALGTGAEPTCSQEGKLRPEPRRDGEAQEAASETQPLSSPPTAASSKAPSSGSAQPPEGHPGKPEPSRAKSRPLPNMPKLVIPSAATKFPPEITVTPPTPTLLSPKGSISEETKQKLKSAILSAQSAANVRKESLCQPALEVLETSSQESSLESETDEDDDYMDI</sequence>
<protein>
    <recommendedName>
        <fullName>Calcineurin-binding protein cabin-1</fullName>
    </recommendedName>
    <alternativeName>
        <fullName>Calcineurin inhibitor</fullName>
        <shortName>CAIN</shortName>
    </alternativeName>
</protein>
<evidence type="ECO:0000250" key="1"/>
<evidence type="ECO:0000256" key="2">
    <source>
        <dbReference type="SAM" id="MobiDB-lite"/>
    </source>
</evidence>
<evidence type="ECO:0000269" key="3">
    <source>
    </source>
</evidence>
<evidence type="ECO:0000269" key="4">
    <source>
    </source>
</evidence>
<evidence type="ECO:0000269" key="5">
    <source>
    </source>
</evidence>
<evidence type="ECO:0000269" key="6">
    <source>
    </source>
</evidence>
<evidence type="ECO:0000269" key="7">
    <source>
    </source>
</evidence>
<evidence type="ECO:0000303" key="8">
    <source>
    </source>
</evidence>
<evidence type="ECO:0000305" key="9"/>
<evidence type="ECO:0007744" key="10">
    <source>
    </source>
</evidence>
<evidence type="ECO:0007744" key="11">
    <source>
    </source>
</evidence>
<evidence type="ECO:0007744" key="12">
    <source>
    </source>
</evidence>
<evidence type="ECO:0007829" key="13">
    <source>
        <dbReference type="PDB" id="1N6J"/>
    </source>
</evidence>